<proteinExistence type="inferred from homology"/>
<protein>
    <recommendedName>
        <fullName>8-oxo-dGTP diphosphatase</fullName>
        <shortName>8-oxo-dGTPase</shortName>
        <ecNumber evidence="1">3.6.1.55</ecNumber>
    </recommendedName>
    <alternativeName>
        <fullName>7,8-dihydro-8-oxoguanine-triphosphatase</fullName>
    </alternativeName>
    <alternativeName>
        <fullName>Mutator protein MutT</fullName>
    </alternativeName>
    <alternativeName>
        <fullName>dGTP pyrophosphohydrolase</fullName>
    </alternativeName>
</protein>
<accession>P44932</accession>
<sequence>MDKKIIQVAAGIIRNEFGQIYLTQRLEGQDFAQSLEFPGGKVDAGETPEQALKRELEEEIGIVALNAELYERFQFEYPTKIISFFFYLVNEWIGEPFGREGQEGFWVEQHALDAGQFPPANAKLIHRLLNETHNFI</sequence>
<organism>
    <name type="scientific">Haemophilus influenzae (strain ATCC 51907 / DSM 11121 / KW20 / Rd)</name>
    <dbReference type="NCBI Taxonomy" id="71421"/>
    <lineage>
        <taxon>Bacteria</taxon>
        <taxon>Pseudomonadati</taxon>
        <taxon>Pseudomonadota</taxon>
        <taxon>Gammaproteobacteria</taxon>
        <taxon>Pasteurellales</taxon>
        <taxon>Pasteurellaceae</taxon>
        <taxon>Haemophilus</taxon>
    </lineage>
</organism>
<evidence type="ECO:0000250" key="1">
    <source>
        <dbReference type="UniProtKB" id="P08337"/>
    </source>
</evidence>
<evidence type="ECO:0000255" key="2">
    <source>
        <dbReference type="PROSITE-ProRule" id="PRU00794"/>
    </source>
</evidence>
<evidence type="ECO:0000305" key="3"/>
<comment type="function">
    <text evidence="1">Specifically hydrolyzes both 8-oxo-deoxyguanosine triphosphate (8-oxo-dGTP) and 8-oxo-guanosine triphosphate (8-oxo-GTP) to the related monophosphates, thereby cleaning up the nucleotide pools and preventing misincorporation of 8-oxoGua into DNA and RNA. It prevents replicational errors by removing an oxidatively damaged form of guanine (8-oxo-dGTP) from DNA and the nucleotide pool. 8-oxo-dGTP can be inserted opposite dA and dC residues of template DNA with almost equal efficiency thus leading to A.T to G.C transversions.</text>
</comment>
<comment type="catalytic activity">
    <reaction evidence="1">
        <text>8-oxo-dGTP + H2O = 8-oxo-dGMP + diphosphate + H(+)</text>
        <dbReference type="Rhea" id="RHEA:31575"/>
        <dbReference type="ChEBI" id="CHEBI:15377"/>
        <dbReference type="ChEBI" id="CHEBI:15378"/>
        <dbReference type="ChEBI" id="CHEBI:33019"/>
        <dbReference type="ChEBI" id="CHEBI:63224"/>
        <dbReference type="ChEBI" id="CHEBI:77896"/>
        <dbReference type="EC" id="3.6.1.55"/>
    </reaction>
</comment>
<comment type="catalytic activity">
    <reaction evidence="1">
        <text>8-oxo-GTP + H2O = 8-oxo-GMP + diphosphate + H(+)</text>
        <dbReference type="Rhea" id="RHEA:67616"/>
        <dbReference type="ChEBI" id="CHEBI:15377"/>
        <dbReference type="ChEBI" id="CHEBI:15378"/>
        <dbReference type="ChEBI" id="CHEBI:33019"/>
        <dbReference type="ChEBI" id="CHEBI:143553"/>
        <dbReference type="ChEBI" id="CHEBI:145694"/>
    </reaction>
</comment>
<comment type="cofactor">
    <cofactor evidence="1">
        <name>Mg(2+)</name>
        <dbReference type="ChEBI" id="CHEBI:18420"/>
    </cofactor>
</comment>
<comment type="similarity">
    <text evidence="3">Belongs to the Nudix hydrolase family.</text>
</comment>
<dbReference type="EC" id="3.6.1.55" evidence="1"/>
<dbReference type="EMBL" id="L42023">
    <property type="protein sequence ID" value="AAC22567.1"/>
    <property type="molecule type" value="Genomic_DNA"/>
</dbReference>
<dbReference type="RefSeq" id="NP_439070.1">
    <property type="nucleotide sequence ID" value="NC_000907.1"/>
</dbReference>
<dbReference type="SMR" id="P44932"/>
<dbReference type="STRING" id="71421.HI_0910"/>
<dbReference type="EnsemblBacteria" id="AAC22567">
    <property type="protein sequence ID" value="AAC22567"/>
    <property type="gene ID" value="HI_0910"/>
</dbReference>
<dbReference type="KEGG" id="hin:HI_0910"/>
<dbReference type="PATRIC" id="fig|71421.8.peg.951"/>
<dbReference type="eggNOG" id="COG0494">
    <property type="taxonomic scope" value="Bacteria"/>
</dbReference>
<dbReference type="HOGENOM" id="CLU_037162_19_2_6"/>
<dbReference type="OrthoDB" id="9810648at2"/>
<dbReference type="PhylomeDB" id="P44932"/>
<dbReference type="BioCyc" id="HINF71421:G1GJ1-949-MONOMER"/>
<dbReference type="Proteomes" id="UP000000579">
    <property type="component" value="Chromosome"/>
</dbReference>
<dbReference type="GO" id="GO:0035539">
    <property type="term" value="F:8-oxo-7,8-dihydrodeoxyguanosine triphosphate pyrophosphatase activity"/>
    <property type="evidence" value="ECO:0000318"/>
    <property type="project" value="GO_Central"/>
</dbReference>
<dbReference type="GO" id="GO:0008413">
    <property type="term" value="F:8-oxo-7,8-dihydroguanosine triphosphate pyrophosphatase activity"/>
    <property type="evidence" value="ECO:0000318"/>
    <property type="project" value="GO_Central"/>
</dbReference>
<dbReference type="GO" id="GO:0044715">
    <property type="term" value="F:8-oxo-dGDP phosphatase activity"/>
    <property type="evidence" value="ECO:0000318"/>
    <property type="project" value="GO_Central"/>
</dbReference>
<dbReference type="GO" id="GO:0044716">
    <property type="term" value="F:8-oxo-GDP phosphatase activity"/>
    <property type="evidence" value="ECO:0000318"/>
    <property type="project" value="GO_Central"/>
</dbReference>
<dbReference type="GO" id="GO:0046872">
    <property type="term" value="F:metal ion binding"/>
    <property type="evidence" value="ECO:0007669"/>
    <property type="project" value="UniProtKB-KW"/>
</dbReference>
<dbReference type="GO" id="GO:0006281">
    <property type="term" value="P:DNA repair"/>
    <property type="evidence" value="ECO:0000318"/>
    <property type="project" value="GO_Central"/>
</dbReference>
<dbReference type="GO" id="GO:0006260">
    <property type="term" value="P:DNA replication"/>
    <property type="evidence" value="ECO:0007669"/>
    <property type="project" value="UniProtKB-KW"/>
</dbReference>
<dbReference type="CDD" id="cd03425">
    <property type="entry name" value="NUDIX_MutT_NudA_like"/>
    <property type="match status" value="1"/>
</dbReference>
<dbReference type="FunFam" id="3.90.79.10:FF:000014">
    <property type="entry name" value="8-oxo-dGTP diphosphatase MutT"/>
    <property type="match status" value="1"/>
</dbReference>
<dbReference type="Gene3D" id="3.90.79.10">
    <property type="entry name" value="Nucleoside Triphosphate Pyrophosphohydrolase"/>
    <property type="match status" value="1"/>
</dbReference>
<dbReference type="InterPro" id="IPR003561">
    <property type="entry name" value="Mutator_MutT"/>
</dbReference>
<dbReference type="InterPro" id="IPR047127">
    <property type="entry name" value="MutT-like"/>
</dbReference>
<dbReference type="InterPro" id="IPR020476">
    <property type="entry name" value="Nudix_hydrolase"/>
</dbReference>
<dbReference type="InterPro" id="IPR015797">
    <property type="entry name" value="NUDIX_hydrolase-like_dom_sf"/>
</dbReference>
<dbReference type="InterPro" id="IPR020084">
    <property type="entry name" value="NUDIX_hydrolase_CS"/>
</dbReference>
<dbReference type="InterPro" id="IPR000086">
    <property type="entry name" value="NUDIX_hydrolase_dom"/>
</dbReference>
<dbReference type="NCBIfam" id="TIGR00586">
    <property type="entry name" value="mutt"/>
    <property type="match status" value="1"/>
</dbReference>
<dbReference type="NCBIfam" id="NF008044">
    <property type="entry name" value="PRK10776.1"/>
    <property type="match status" value="1"/>
</dbReference>
<dbReference type="PANTHER" id="PTHR47707">
    <property type="entry name" value="8-OXO-DGTP DIPHOSPHATASE"/>
    <property type="match status" value="1"/>
</dbReference>
<dbReference type="PANTHER" id="PTHR47707:SF1">
    <property type="entry name" value="NUDIX HYDROLASE FAMILY PROTEIN"/>
    <property type="match status" value="1"/>
</dbReference>
<dbReference type="Pfam" id="PF00293">
    <property type="entry name" value="NUDIX"/>
    <property type="match status" value="1"/>
</dbReference>
<dbReference type="PRINTS" id="PR01401">
    <property type="entry name" value="MUTATORMUTT"/>
</dbReference>
<dbReference type="PRINTS" id="PR00502">
    <property type="entry name" value="NUDIXFAMILY"/>
</dbReference>
<dbReference type="SUPFAM" id="SSF55811">
    <property type="entry name" value="Nudix"/>
    <property type="match status" value="1"/>
</dbReference>
<dbReference type="PROSITE" id="PS51462">
    <property type="entry name" value="NUDIX"/>
    <property type="match status" value="1"/>
</dbReference>
<dbReference type="PROSITE" id="PS00893">
    <property type="entry name" value="NUDIX_BOX"/>
    <property type="match status" value="1"/>
</dbReference>
<name>MUTT_HAEIN</name>
<reference key="1">
    <citation type="journal article" date="1995" name="Science">
        <title>Whole-genome random sequencing and assembly of Haemophilus influenzae Rd.</title>
        <authorList>
            <person name="Fleischmann R.D."/>
            <person name="Adams M.D."/>
            <person name="White O."/>
            <person name="Clayton R.A."/>
            <person name="Kirkness E.F."/>
            <person name="Kerlavage A.R."/>
            <person name="Bult C.J."/>
            <person name="Tomb J.-F."/>
            <person name="Dougherty B.A."/>
            <person name="Merrick J.M."/>
            <person name="McKenney K."/>
            <person name="Sutton G.G."/>
            <person name="FitzHugh W."/>
            <person name="Fields C.A."/>
            <person name="Gocayne J.D."/>
            <person name="Scott J.D."/>
            <person name="Shirley R."/>
            <person name="Liu L.-I."/>
            <person name="Glodek A."/>
            <person name="Kelley J.M."/>
            <person name="Weidman J.F."/>
            <person name="Phillips C.A."/>
            <person name="Spriggs T."/>
            <person name="Hedblom E."/>
            <person name="Cotton M.D."/>
            <person name="Utterback T.R."/>
            <person name="Hanna M.C."/>
            <person name="Nguyen D.T."/>
            <person name="Saudek D.M."/>
            <person name="Brandon R.C."/>
            <person name="Fine L.D."/>
            <person name="Fritchman J.L."/>
            <person name="Fuhrmann J.L."/>
            <person name="Geoghagen N.S.M."/>
            <person name="Gnehm C.L."/>
            <person name="McDonald L.A."/>
            <person name="Small K.V."/>
            <person name="Fraser C.M."/>
            <person name="Smith H.O."/>
            <person name="Venter J.C."/>
        </authorList>
    </citation>
    <scope>NUCLEOTIDE SEQUENCE [LARGE SCALE GENOMIC DNA]</scope>
    <source>
        <strain>ATCC 51907 / DSM 11121 / KW20 / Rd</strain>
    </source>
</reference>
<feature type="chain" id="PRO_0000056946" description="8-oxo-dGTP diphosphatase">
    <location>
        <begin position="1"/>
        <end position="136"/>
    </location>
</feature>
<feature type="domain" description="Nudix hydrolase" evidence="2">
    <location>
        <begin position="4"/>
        <end position="130"/>
    </location>
</feature>
<feature type="short sequence motif" description="Nudix box" evidence="2">
    <location>
        <begin position="40"/>
        <end position="61"/>
    </location>
</feature>
<feature type="binding site" evidence="1">
    <location>
        <position position="39"/>
    </location>
    <ligand>
        <name>Mg(2+)</name>
        <dbReference type="ChEBI" id="CHEBI:18420"/>
    </ligand>
</feature>
<feature type="binding site" evidence="1">
    <location>
        <position position="59"/>
    </location>
    <ligand>
        <name>Mg(2+)</name>
        <dbReference type="ChEBI" id="CHEBI:18420"/>
    </ligand>
</feature>
<gene>
    <name type="primary">mutT</name>
    <name type="ordered locus">HI_0910</name>
</gene>
<keyword id="KW-0227">DNA damage</keyword>
<keyword id="KW-0234">DNA repair</keyword>
<keyword id="KW-0235">DNA replication</keyword>
<keyword id="KW-0378">Hydrolase</keyword>
<keyword id="KW-0460">Magnesium</keyword>
<keyword id="KW-0479">Metal-binding</keyword>
<keyword id="KW-0515">Mutator protein</keyword>
<keyword id="KW-1185">Reference proteome</keyword>